<reference key="1">
    <citation type="submission" date="2004-11" db="EMBL/GenBank/DDBJ databases">
        <title>Complete genome sequence of Thermus thermophilus HB8.</title>
        <authorList>
            <person name="Masui R."/>
            <person name="Kurokawa K."/>
            <person name="Nakagawa N."/>
            <person name="Tokunaga F."/>
            <person name="Koyama Y."/>
            <person name="Shibata T."/>
            <person name="Oshima T."/>
            <person name="Yokoyama S."/>
            <person name="Yasunaga T."/>
            <person name="Kuramitsu S."/>
        </authorList>
    </citation>
    <scope>NUCLEOTIDE SEQUENCE [LARGE SCALE GENOMIC DNA]</scope>
    <source>
        <strain>ATCC 27634 / DSM 579 / HB8</strain>
    </source>
</reference>
<protein>
    <recommendedName>
        <fullName evidence="1">S-adenosylmethionine:tRNA ribosyltransferase-isomerase</fullName>
        <ecNumber evidence="1">2.4.99.17</ecNumber>
    </recommendedName>
    <alternativeName>
        <fullName evidence="1">Queuosine biosynthesis protein QueA</fullName>
    </alternativeName>
</protein>
<feature type="chain" id="PRO_0000231385" description="S-adenosylmethionine:tRNA ribosyltransferase-isomerase">
    <location>
        <begin position="1"/>
        <end position="345"/>
    </location>
</feature>
<accession>Q5SMH0</accession>
<organism>
    <name type="scientific">Thermus thermophilus (strain ATCC 27634 / DSM 579 / HB8)</name>
    <dbReference type="NCBI Taxonomy" id="300852"/>
    <lineage>
        <taxon>Bacteria</taxon>
        <taxon>Thermotogati</taxon>
        <taxon>Deinococcota</taxon>
        <taxon>Deinococci</taxon>
        <taxon>Thermales</taxon>
        <taxon>Thermaceae</taxon>
        <taxon>Thermus</taxon>
    </lineage>
</organism>
<sequence length="345" mass="38429">MEGLEAYDYHLPPEQIAQEGVEPRDMARLMVVYREGPFRVAHKRVRDLPEFLRPGDVLVFNESKVIPARLLARKPTGGKVEILLVRERSPGLWEALLGPARKAPPGTRLLLLSPKDLAPVPGLQAEVVAVEEDGVRLLRFQGDLVAHLEEVGEVPLPPYIKAKIPMERYQTVYARRPGSVAAPTAGLHFTPELLERLREMGVELRFLTLHVGPGTFRPVKGDPEKHEMHAEPYAIPEEVAEAVNRAKAEGRRVVAVGTTVVRALESAYREGVGVVAGEGETRLFIRPPYTFKVVDALFTNFHLPRSTLLMLVAAFLGRERTLEAYRLAVAEGYRFYSLGDAMLIL</sequence>
<comment type="function">
    <text evidence="1">Transfers and isomerizes the ribose moiety from AdoMet to the 7-aminomethyl group of 7-deazaguanine (preQ1-tRNA) to give epoxyqueuosine (oQ-tRNA).</text>
</comment>
<comment type="catalytic activity">
    <reaction evidence="1">
        <text>7-aminomethyl-7-carbaguanosine(34) in tRNA + S-adenosyl-L-methionine = epoxyqueuosine(34) in tRNA + adenine + L-methionine + 2 H(+)</text>
        <dbReference type="Rhea" id="RHEA:32155"/>
        <dbReference type="Rhea" id="RHEA-COMP:10342"/>
        <dbReference type="Rhea" id="RHEA-COMP:18582"/>
        <dbReference type="ChEBI" id="CHEBI:15378"/>
        <dbReference type="ChEBI" id="CHEBI:16708"/>
        <dbReference type="ChEBI" id="CHEBI:57844"/>
        <dbReference type="ChEBI" id="CHEBI:59789"/>
        <dbReference type="ChEBI" id="CHEBI:82833"/>
        <dbReference type="ChEBI" id="CHEBI:194443"/>
        <dbReference type="EC" id="2.4.99.17"/>
    </reaction>
</comment>
<comment type="pathway">
    <text evidence="1">tRNA modification; tRNA-queuosine biosynthesis.</text>
</comment>
<comment type="subunit">
    <text evidence="1">Monomer.</text>
</comment>
<comment type="subcellular location">
    <subcellularLocation>
        <location evidence="1">Cytoplasm</location>
    </subcellularLocation>
</comment>
<comment type="similarity">
    <text evidence="1">Belongs to the QueA family.</text>
</comment>
<gene>
    <name evidence="1" type="primary">queA</name>
    <name type="ordered locus">TTHA1058</name>
</gene>
<keyword id="KW-0963">Cytoplasm</keyword>
<keyword id="KW-0671">Queuosine biosynthesis</keyword>
<keyword id="KW-1185">Reference proteome</keyword>
<keyword id="KW-0949">S-adenosyl-L-methionine</keyword>
<keyword id="KW-0808">Transferase</keyword>
<evidence type="ECO:0000255" key="1">
    <source>
        <dbReference type="HAMAP-Rule" id="MF_00113"/>
    </source>
</evidence>
<dbReference type="EC" id="2.4.99.17" evidence="1"/>
<dbReference type="EMBL" id="AP008226">
    <property type="protein sequence ID" value="BAD70881.1"/>
    <property type="molecule type" value="Genomic_DNA"/>
</dbReference>
<dbReference type="RefSeq" id="WP_011173135.1">
    <property type="nucleotide sequence ID" value="NC_006461.1"/>
</dbReference>
<dbReference type="RefSeq" id="YP_144324.1">
    <property type="nucleotide sequence ID" value="NC_006461.1"/>
</dbReference>
<dbReference type="SMR" id="Q5SMH0"/>
<dbReference type="EnsemblBacteria" id="BAD70881">
    <property type="protein sequence ID" value="BAD70881"/>
    <property type="gene ID" value="BAD70881"/>
</dbReference>
<dbReference type="GeneID" id="3169205"/>
<dbReference type="KEGG" id="ttj:TTHA1058"/>
<dbReference type="PATRIC" id="fig|300852.9.peg.1038"/>
<dbReference type="eggNOG" id="COG0809">
    <property type="taxonomic scope" value="Bacteria"/>
</dbReference>
<dbReference type="HOGENOM" id="CLU_039110_1_1_0"/>
<dbReference type="PhylomeDB" id="Q5SMH0"/>
<dbReference type="UniPathway" id="UPA00392"/>
<dbReference type="Proteomes" id="UP000000532">
    <property type="component" value="Chromosome"/>
</dbReference>
<dbReference type="GO" id="GO:0005737">
    <property type="term" value="C:cytoplasm"/>
    <property type="evidence" value="ECO:0007669"/>
    <property type="project" value="UniProtKB-SubCell"/>
</dbReference>
<dbReference type="GO" id="GO:0051075">
    <property type="term" value="F:S-adenosylmethionine:tRNA ribosyltransferase-isomerase activity"/>
    <property type="evidence" value="ECO:0007669"/>
    <property type="project" value="UniProtKB-EC"/>
</dbReference>
<dbReference type="GO" id="GO:0008616">
    <property type="term" value="P:queuosine biosynthetic process"/>
    <property type="evidence" value="ECO:0007669"/>
    <property type="project" value="UniProtKB-UniRule"/>
</dbReference>
<dbReference type="GO" id="GO:0002099">
    <property type="term" value="P:tRNA wobble guanine modification"/>
    <property type="evidence" value="ECO:0007669"/>
    <property type="project" value="TreeGrafter"/>
</dbReference>
<dbReference type="FunFam" id="2.40.10.240:FF:000002">
    <property type="entry name" value="S-adenosylmethionine:tRNA ribosyltransferase-isomerase"/>
    <property type="match status" value="1"/>
</dbReference>
<dbReference type="FunFam" id="3.40.1780.10:FF:000001">
    <property type="entry name" value="S-adenosylmethionine:tRNA ribosyltransferase-isomerase"/>
    <property type="match status" value="1"/>
</dbReference>
<dbReference type="Gene3D" id="2.40.10.240">
    <property type="entry name" value="QueA-like"/>
    <property type="match status" value="1"/>
</dbReference>
<dbReference type="Gene3D" id="3.40.1780.10">
    <property type="entry name" value="QueA-like"/>
    <property type="match status" value="1"/>
</dbReference>
<dbReference type="HAMAP" id="MF_00113">
    <property type="entry name" value="QueA"/>
    <property type="match status" value="1"/>
</dbReference>
<dbReference type="InterPro" id="IPR003699">
    <property type="entry name" value="QueA"/>
</dbReference>
<dbReference type="InterPro" id="IPR042118">
    <property type="entry name" value="QueA_dom1"/>
</dbReference>
<dbReference type="InterPro" id="IPR042119">
    <property type="entry name" value="QueA_dom2"/>
</dbReference>
<dbReference type="InterPro" id="IPR036100">
    <property type="entry name" value="QueA_sf"/>
</dbReference>
<dbReference type="NCBIfam" id="NF001140">
    <property type="entry name" value="PRK00147.1"/>
    <property type="match status" value="1"/>
</dbReference>
<dbReference type="NCBIfam" id="TIGR00113">
    <property type="entry name" value="queA"/>
    <property type="match status" value="1"/>
</dbReference>
<dbReference type="PANTHER" id="PTHR30307">
    <property type="entry name" value="S-ADENOSYLMETHIONINE:TRNA RIBOSYLTRANSFERASE-ISOMERASE"/>
    <property type="match status" value="1"/>
</dbReference>
<dbReference type="PANTHER" id="PTHR30307:SF0">
    <property type="entry name" value="S-ADENOSYLMETHIONINE:TRNA RIBOSYLTRANSFERASE-ISOMERASE"/>
    <property type="match status" value="1"/>
</dbReference>
<dbReference type="Pfam" id="PF02547">
    <property type="entry name" value="Queuosine_synth"/>
    <property type="match status" value="1"/>
</dbReference>
<dbReference type="SUPFAM" id="SSF111337">
    <property type="entry name" value="QueA-like"/>
    <property type="match status" value="1"/>
</dbReference>
<name>QUEA_THET8</name>
<proteinExistence type="inferred from homology"/>